<reference key="1">
    <citation type="journal article" date="1997" name="Nature">
        <title>The complete genome sequence of the Gram-positive bacterium Bacillus subtilis.</title>
        <authorList>
            <person name="Kunst F."/>
            <person name="Ogasawara N."/>
            <person name="Moszer I."/>
            <person name="Albertini A.M."/>
            <person name="Alloni G."/>
            <person name="Azevedo V."/>
            <person name="Bertero M.G."/>
            <person name="Bessieres P."/>
            <person name="Bolotin A."/>
            <person name="Borchert S."/>
            <person name="Borriss R."/>
            <person name="Boursier L."/>
            <person name="Brans A."/>
            <person name="Braun M."/>
            <person name="Brignell S.C."/>
            <person name="Bron S."/>
            <person name="Brouillet S."/>
            <person name="Bruschi C.V."/>
            <person name="Caldwell B."/>
            <person name="Capuano V."/>
            <person name="Carter N.M."/>
            <person name="Choi S.-K."/>
            <person name="Codani J.-J."/>
            <person name="Connerton I.F."/>
            <person name="Cummings N.J."/>
            <person name="Daniel R.A."/>
            <person name="Denizot F."/>
            <person name="Devine K.M."/>
            <person name="Duesterhoeft A."/>
            <person name="Ehrlich S.D."/>
            <person name="Emmerson P.T."/>
            <person name="Entian K.-D."/>
            <person name="Errington J."/>
            <person name="Fabret C."/>
            <person name="Ferrari E."/>
            <person name="Foulger D."/>
            <person name="Fritz C."/>
            <person name="Fujita M."/>
            <person name="Fujita Y."/>
            <person name="Fuma S."/>
            <person name="Galizzi A."/>
            <person name="Galleron N."/>
            <person name="Ghim S.-Y."/>
            <person name="Glaser P."/>
            <person name="Goffeau A."/>
            <person name="Golightly E.J."/>
            <person name="Grandi G."/>
            <person name="Guiseppi G."/>
            <person name="Guy B.J."/>
            <person name="Haga K."/>
            <person name="Haiech J."/>
            <person name="Harwood C.R."/>
            <person name="Henaut A."/>
            <person name="Hilbert H."/>
            <person name="Holsappel S."/>
            <person name="Hosono S."/>
            <person name="Hullo M.-F."/>
            <person name="Itaya M."/>
            <person name="Jones L.-M."/>
            <person name="Joris B."/>
            <person name="Karamata D."/>
            <person name="Kasahara Y."/>
            <person name="Klaerr-Blanchard M."/>
            <person name="Klein C."/>
            <person name="Kobayashi Y."/>
            <person name="Koetter P."/>
            <person name="Koningstein G."/>
            <person name="Krogh S."/>
            <person name="Kumano M."/>
            <person name="Kurita K."/>
            <person name="Lapidus A."/>
            <person name="Lardinois S."/>
            <person name="Lauber J."/>
            <person name="Lazarevic V."/>
            <person name="Lee S.-M."/>
            <person name="Levine A."/>
            <person name="Liu H."/>
            <person name="Masuda S."/>
            <person name="Mauel C."/>
            <person name="Medigue C."/>
            <person name="Medina N."/>
            <person name="Mellado R.P."/>
            <person name="Mizuno M."/>
            <person name="Moestl D."/>
            <person name="Nakai S."/>
            <person name="Noback M."/>
            <person name="Noone D."/>
            <person name="O'Reilly M."/>
            <person name="Ogawa K."/>
            <person name="Ogiwara A."/>
            <person name="Oudega B."/>
            <person name="Park S.-H."/>
            <person name="Parro V."/>
            <person name="Pohl T.M."/>
            <person name="Portetelle D."/>
            <person name="Porwollik S."/>
            <person name="Prescott A.M."/>
            <person name="Presecan E."/>
            <person name="Pujic P."/>
            <person name="Purnelle B."/>
            <person name="Rapoport G."/>
            <person name="Rey M."/>
            <person name="Reynolds S."/>
            <person name="Rieger M."/>
            <person name="Rivolta C."/>
            <person name="Rocha E."/>
            <person name="Roche B."/>
            <person name="Rose M."/>
            <person name="Sadaie Y."/>
            <person name="Sato T."/>
            <person name="Scanlan E."/>
            <person name="Schleich S."/>
            <person name="Schroeter R."/>
            <person name="Scoffone F."/>
            <person name="Sekiguchi J."/>
            <person name="Sekowska A."/>
            <person name="Seror S.J."/>
            <person name="Serror P."/>
            <person name="Shin B.-S."/>
            <person name="Soldo B."/>
            <person name="Sorokin A."/>
            <person name="Tacconi E."/>
            <person name="Takagi T."/>
            <person name="Takahashi H."/>
            <person name="Takemaru K."/>
            <person name="Takeuchi M."/>
            <person name="Tamakoshi A."/>
            <person name="Tanaka T."/>
            <person name="Terpstra P."/>
            <person name="Tognoni A."/>
            <person name="Tosato V."/>
            <person name="Uchiyama S."/>
            <person name="Vandenbol M."/>
            <person name="Vannier F."/>
            <person name="Vassarotti A."/>
            <person name="Viari A."/>
            <person name="Wambutt R."/>
            <person name="Wedler E."/>
            <person name="Wedler H."/>
            <person name="Weitzenegger T."/>
            <person name="Winters P."/>
            <person name="Wipat A."/>
            <person name="Yamamoto H."/>
            <person name="Yamane K."/>
            <person name="Yasumoto K."/>
            <person name="Yata K."/>
            <person name="Yoshida K."/>
            <person name="Yoshikawa H.-F."/>
            <person name="Zumstein E."/>
            <person name="Yoshikawa H."/>
            <person name="Danchin A."/>
        </authorList>
    </citation>
    <scope>NUCLEOTIDE SEQUENCE [LARGE SCALE GENOMIC DNA]</scope>
    <source>
        <strain>168</strain>
    </source>
</reference>
<feature type="chain" id="PRO_0000389647" description="Uncharacterized protein YoeD">
    <location>
        <begin position="1"/>
        <end position="76"/>
    </location>
</feature>
<dbReference type="EMBL" id="AL009126">
    <property type="protein sequence ID" value="CAB13723.1"/>
    <property type="molecule type" value="Genomic_DNA"/>
</dbReference>
<dbReference type="PIR" id="D69905">
    <property type="entry name" value="D69905"/>
</dbReference>
<dbReference type="RefSeq" id="NP_389722.1">
    <property type="nucleotide sequence ID" value="NC_000964.3"/>
</dbReference>
<dbReference type="RefSeq" id="WP_003231472.1">
    <property type="nucleotide sequence ID" value="NZ_OZ025638.1"/>
</dbReference>
<dbReference type="FunCoup" id="O34555">
    <property type="interactions" value="47"/>
</dbReference>
<dbReference type="STRING" id="224308.BSU18400"/>
<dbReference type="PaxDb" id="224308-BSU18400"/>
<dbReference type="EnsemblBacteria" id="CAB13723">
    <property type="protein sequence ID" value="CAB13723"/>
    <property type="gene ID" value="BSU_18400"/>
</dbReference>
<dbReference type="GeneID" id="939991"/>
<dbReference type="KEGG" id="bsu:BSU18400"/>
<dbReference type="PATRIC" id="fig|224308.179.peg.2007"/>
<dbReference type="eggNOG" id="COG0166">
    <property type="taxonomic scope" value="Bacteria"/>
</dbReference>
<dbReference type="InParanoid" id="O34555"/>
<dbReference type="OrthoDB" id="2166477at2"/>
<dbReference type="BioCyc" id="BSUB:BSU18400-MONOMER"/>
<dbReference type="Proteomes" id="UP000001570">
    <property type="component" value="Chromosome"/>
</dbReference>
<dbReference type="GO" id="GO:0003677">
    <property type="term" value="F:DNA binding"/>
    <property type="evidence" value="ECO:0007669"/>
    <property type="project" value="InterPro"/>
</dbReference>
<dbReference type="Gene3D" id="3.90.105.50">
    <property type="match status" value="1"/>
</dbReference>
<dbReference type="InterPro" id="IPR041657">
    <property type="entry name" value="HTH_17"/>
</dbReference>
<dbReference type="InterPro" id="IPR010093">
    <property type="entry name" value="SinI_DNA-bd"/>
</dbReference>
<dbReference type="InterPro" id="IPR038148">
    <property type="entry name" value="Tn1545/Tn916_Xis"/>
</dbReference>
<dbReference type="NCBIfam" id="TIGR01764">
    <property type="entry name" value="excise"/>
    <property type="match status" value="1"/>
</dbReference>
<dbReference type="Pfam" id="PF12728">
    <property type="entry name" value="HTH_17"/>
    <property type="match status" value="1"/>
</dbReference>
<protein>
    <recommendedName>
        <fullName>Uncharacterized protein YoeD</fullName>
    </recommendedName>
</protein>
<gene>
    <name type="primary">yoeD</name>
    <name type="ordered locus">BSU18400</name>
</gene>
<proteinExistence type="predicted"/>
<sequence length="76" mass="8990">MYLTIEETAEYTNLSEDYIKSLVLEGKIRAVHDGEQFLIYKEQFKTHLEQLENYKALVQEILNEPIPEDIDVKDED</sequence>
<accession>O34555</accession>
<organism>
    <name type="scientific">Bacillus subtilis (strain 168)</name>
    <dbReference type="NCBI Taxonomy" id="224308"/>
    <lineage>
        <taxon>Bacteria</taxon>
        <taxon>Bacillati</taxon>
        <taxon>Bacillota</taxon>
        <taxon>Bacilli</taxon>
        <taxon>Bacillales</taxon>
        <taxon>Bacillaceae</taxon>
        <taxon>Bacillus</taxon>
    </lineage>
</organism>
<name>YOED_BACSU</name>
<keyword id="KW-1185">Reference proteome</keyword>